<feature type="chain" id="PRO_0000126156" description="Large ribosomal subunit protein bL36">
    <location>
        <begin position="1"/>
        <end position="37"/>
    </location>
</feature>
<proteinExistence type="inferred from homology"/>
<dbReference type="EMBL" id="BX640423">
    <property type="protein sequence ID" value="CAE39794.1"/>
    <property type="molecule type" value="Genomic_DNA"/>
</dbReference>
<dbReference type="RefSeq" id="WP_003806928.1">
    <property type="nucleotide sequence ID" value="NC_002928.3"/>
</dbReference>
<dbReference type="SMR" id="Q7W2D3"/>
<dbReference type="GeneID" id="92787646"/>
<dbReference type="GeneID" id="94357819"/>
<dbReference type="KEGG" id="bpa:BPP0053"/>
<dbReference type="HOGENOM" id="CLU_135723_6_2_4"/>
<dbReference type="Proteomes" id="UP000001421">
    <property type="component" value="Chromosome"/>
</dbReference>
<dbReference type="GO" id="GO:0005737">
    <property type="term" value="C:cytoplasm"/>
    <property type="evidence" value="ECO:0007669"/>
    <property type="project" value="UniProtKB-ARBA"/>
</dbReference>
<dbReference type="GO" id="GO:1990904">
    <property type="term" value="C:ribonucleoprotein complex"/>
    <property type="evidence" value="ECO:0007669"/>
    <property type="project" value="UniProtKB-KW"/>
</dbReference>
<dbReference type="GO" id="GO:0005840">
    <property type="term" value="C:ribosome"/>
    <property type="evidence" value="ECO:0007669"/>
    <property type="project" value="UniProtKB-KW"/>
</dbReference>
<dbReference type="GO" id="GO:0003735">
    <property type="term" value="F:structural constituent of ribosome"/>
    <property type="evidence" value="ECO:0007669"/>
    <property type="project" value="InterPro"/>
</dbReference>
<dbReference type="GO" id="GO:0006412">
    <property type="term" value="P:translation"/>
    <property type="evidence" value="ECO:0007669"/>
    <property type="project" value="UniProtKB-UniRule"/>
</dbReference>
<dbReference type="HAMAP" id="MF_00251">
    <property type="entry name" value="Ribosomal_bL36"/>
    <property type="match status" value="1"/>
</dbReference>
<dbReference type="InterPro" id="IPR000473">
    <property type="entry name" value="Ribosomal_bL36"/>
</dbReference>
<dbReference type="InterPro" id="IPR035977">
    <property type="entry name" value="Ribosomal_bL36_sp"/>
</dbReference>
<dbReference type="NCBIfam" id="TIGR01022">
    <property type="entry name" value="rpmJ_bact"/>
    <property type="match status" value="1"/>
</dbReference>
<dbReference type="PANTHER" id="PTHR42888">
    <property type="entry name" value="50S RIBOSOMAL PROTEIN L36, CHLOROPLASTIC"/>
    <property type="match status" value="1"/>
</dbReference>
<dbReference type="PANTHER" id="PTHR42888:SF1">
    <property type="entry name" value="LARGE RIBOSOMAL SUBUNIT PROTEIN BL36C"/>
    <property type="match status" value="1"/>
</dbReference>
<dbReference type="Pfam" id="PF00444">
    <property type="entry name" value="Ribosomal_L36"/>
    <property type="match status" value="1"/>
</dbReference>
<dbReference type="SUPFAM" id="SSF57840">
    <property type="entry name" value="Ribosomal protein L36"/>
    <property type="match status" value="1"/>
</dbReference>
<dbReference type="PROSITE" id="PS00828">
    <property type="entry name" value="RIBOSOMAL_L36"/>
    <property type="match status" value="1"/>
</dbReference>
<accession>Q7W2D3</accession>
<sequence>MKVMASVKRICRNCKVIKRHGVVRVICTDPRHKQRQG</sequence>
<reference key="1">
    <citation type="journal article" date="2003" name="Nat. Genet.">
        <title>Comparative analysis of the genome sequences of Bordetella pertussis, Bordetella parapertussis and Bordetella bronchiseptica.</title>
        <authorList>
            <person name="Parkhill J."/>
            <person name="Sebaihia M."/>
            <person name="Preston A."/>
            <person name="Murphy L.D."/>
            <person name="Thomson N.R."/>
            <person name="Harris D.E."/>
            <person name="Holden M.T.G."/>
            <person name="Churcher C.M."/>
            <person name="Bentley S.D."/>
            <person name="Mungall K.L."/>
            <person name="Cerdeno-Tarraga A.-M."/>
            <person name="Temple L."/>
            <person name="James K.D."/>
            <person name="Harris B."/>
            <person name="Quail M.A."/>
            <person name="Achtman M."/>
            <person name="Atkin R."/>
            <person name="Baker S."/>
            <person name="Basham D."/>
            <person name="Bason N."/>
            <person name="Cherevach I."/>
            <person name="Chillingworth T."/>
            <person name="Collins M."/>
            <person name="Cronin A."/>
            <person name="Davis P."/>
            <person name="Doggett J."/>
            <person name="Feltwell T."/>
            <person name="Goble A."/>
            <person name="Hamlin N."/>
            <person name="Hauser H."/>
            <person name="Holroyd S."/>
            <person name="Jagels K."/>
            <person name="Leather S."/>
            <person name="Moule S."/>
            <person name="Norberczak H."/>
            <person name="O'Neil S."/>
            <person name="Ormond D."/>
            <person name="Price C."/>
            <person name="Rabbinowitsch E."/>
            <person name="Rutter S."/>
            <person name="Sanders M."/>
            <person name="Saunders D."/>
            <person name="Seeger K."/>
            <person name="Sharp S."/>
            <person name="Simmonds M."/>
            <person name="Skelton J."/>
            <person name="Squares R."/>
            <person name="Squares S."/>
            <person name="Stevens K."/>
            <person name="Unwin L."/>
            <person name="Whitehead S."/>
            <person name="Barrell B.G."/>
            <person name="Maskell D.J."/>
        </authorList>
    </citation>
    <scope>NUCLEOTIDE SEQUENCE [LARGE SCALE GENOMIC DNA]</scope>
    <source>
        <strain>12822 / ATCC BAA-587 / NCTC 13253</strain>
    </source>
</reference>
<name>RL36_BORPA</name>
<comment type="similarity">
    <text evidence="1">Belongs to the bacterial ribosomal protein bL36 family.</text>
</comment>
<keyword id="KW-0687">Ribonucleoprotein</keyword>
<keyword id="KW-0689">Ribosomal protein</keyword>
<protein>
    <recommendedName>
        <fullName evidence="1">Large ribosomal subunit protein bL36</fullName>
    </recommendedName>
    <alternativeName>
        <fullName evidence="2">50S ribosomal protein L36</fullName>
    </alternativeName>
</protein>
<gene>
    <name evidence="1" type="primary">rpmJ</name>
    <name type="ordered locus">BPP0053</name>
</gene>
<organism>
    <name type="scientific">Bordetella parapertussis (strain 12822 / ATCC BAA-587 / NCTC 13253)</name>
    <dbReference type="NCBI Taxonomy" id="257311"/>
    <lineage>
        <taxon>Bacteria</taxon>
        <taxon>Pseudomonadati</taxon>
        <taxon>Pseudomonadota</taxon>
        <taxon>Betaproteobacteria</taxon>
        <taxon>Burkholderiales</taxon>
        <taxon>Alcaligenaceae</taxon>
        <taxon>Bordetella</taxon>
    </lineage>
</organism>
<evidence type="ECO:0000255" key="1">
    <source>
        <dbReference type="HAMAP-Rule" id="MF_00251"/>
    </source>
</evidence>
<evidence type="ECO:0000305" key="2"/>